<feature type="chain" id="PRO_1000061187" description="Co-chaperonin GroES">
    <location>
        <begin position="1"/>
        <end position="97"/>
    </location>
</feature>
<sequence length="97" mass="10387">MNIRPLHDRVIVKRKEVETKSAGGIVLTGSAAAKSTRGEVLAVGNGRILENGEVKPLDVKVGDIVIFNDGYGVKSEKIDNEEVLIMSESDILAIVEA</sequence>
<gene>
    <name evidence="1" type="primary">groES</name>
    <name evidence="1" type="synonym">groS</name>
    <name type="ordered locus">EcE24377A_4697</name>
</gene>
<organism>
    <name type="scientific">Escherichia coli O139:H28 (strain E24377A / ETEC)</name>
    <dbReference type="NCBI Taxonomy" id="331111"/>
    <lineage>
        <taxon>Bacteria</taxon>
        <taxon>Pseudomonadati</taxon>
        <taxon>Pseudomonadota</taxon>
        <taxon>Gammaproteobacteria</taxon>
        <taxon>Enterobacterales</taxon>
        <taxon>Enterobacteriaceae</taxon>
        <taxon>Escherichia</taxon>
    </lineage>
</organism>
<keyword id="KW-0143">Chaperone</keyword>
<keyword id="KW-0963">Cytoplasm</keyword>
<keyword id="KW-1185">Reference proteome</keyword>
<proteinExistence type="inferred from homology"/>
<protein>
    <recommendedName>
        <fullName evidence="1">Co-chaperonin GroES</fullName>
    </recommendedName>
    <alternativeName>
        <fullName evidence="1">10 kDa chaperonin</fullName>
    </alternativeName>
    <alternativeName>
        <fullName evidence="1">Chaperonin-10</fullName>
        <shortName evidence="1">Cpn10</shortName>
    </alternativeName>
</protein>
<accession>A7ZV11</accession>
<dbReference type="EMBL" id="CP000800">
    <property type="protein sequence ID" value="ABV16744.1"/>
    <property type="molecule type" value="Genomic_DNA"/>
</dbReference>
<dbReference type="RefSeq" id="WP_001026276.1">
    <property type="nucleotide sequence ID" value="NC_009801.1"/>
</dbReference>
<dbReference type="BMRB" id="A7ZV11"/>
<dbReference type="SMR" id="A7ZV11"/>
<dbReference type="KEGG" id="ecw:EcE24377A_4697"/>
<dbReference type="HOGENOM" id="CLU_132825_1_1_6"/>
<dbReference type="Proteomes" id="UP000001122">
    <property type="component" value="Chromosome"/>
</dbReference>
<dbReference type="GO" id="GO:0005737">
    <property type="term" value="C:cytoplasm"/>
    <property type="evidence" value="ECO:0007669"/>
    <property type="project" value="UniProtKB-SubCell"/>
</dbReference>
<dbReference type="GO" id="GO:0005524">
    <property type="term" value="F:ATP binding"/>
    <property type="evidence" value="ECO:0007669"/>
    <property type="project" value="InterPro"/>
</dbReference>
<dbReference type="GO" id="GO:0046872">
    <property type="term" value="F:metal ion binding"/>
    <property type="evidence" value="ECO:0007669"/>
    <property type="project" value="TreeGrafter"/>
</dbReference>
<dbReference type="GO" id="GO:0044183">
    <property type="term" value="F:protein folding chaperone"/>
    <property type="evidence" value="ECO:0007669"/>
    <property type="project" value="InterPro"/>
</dbReference>
<dbReference type="GO" id="GO:0051087">
    <property type="term" value="F:protein-folding chaperone binding"/>
    <property type="evidence" value="ECO:0007669"/>
    <property type="project" value="TreeGrafter"/>
</dbReference>
<dbReference type="GO" id="GO:0051082">
    <property type="term" value="F:unfolded protein binding"/>
    <property type="evidence" value="ECO:0007669"/>
    <property type="project" value="TreeGrafter"/>
</dbReference>
<dbReference type="GO" id="GO:0051085">
    <property type="term" value="P:chaperone cofactor-dependent protein refolding"/>
    <property type="evidence" value="ECO:0007669"/>
    <property type="project" value="TreeGrafter"/>
</dbReference>
<dbReference type="CDD" id="cd00320">
    <property type="entry name" value="cpn10"/>
    <property type="match status" value="1"/>
</dbReference>
<dbReference type="FunFam" id="2.30.33.40:FF:000001">
    <property type="entry name" value="10 kDa chaperonin"/>
    <property type="match status" value="1"/>
</dbReference>
<dbReference type="Gene3D" id="2.30.33.40">
    <property type="entry name" value="GroES chaperonin"/>
    <property type="match status" value="1"/>
</dbReference>
<dbReference type="HAMAP" id="MF_00580">
    <property type="entry name" value="CH10"/>
    <property type="match status" value="1"/>
</dbReference>
<dbReference type="InterPro" id="IPR020818">
    <property type="entry name" value="Chaperonin_GroES"/>
</dbReference>
<dbReference type="InterPro" id="IPR037124">
    <property type="entry name" value="Chaperonin_GroES_sf"/>
</dbReference>
<dbReference type="InterPro" id="IPR018369">
    <property type="entry name" value="Chaprnonin_Cpn10_CS"/>
</dbReference>
<dbReference type="InterPro" id="IPR011032">
    <property type="entry name" value="GroES-like_sf"/>
</dbReference>
<dbReference type="NCBIfam" id="NF001526">
    <property type="entry name" value="PRK00364.1-1"/>
    <property type="match status" value="1"/>
</dbReference>
<dbReference type="NCBIfam" id="NF001527">
    <property type="entry name" value="PRK00364.1-2"/>
    <property type="match status" value="1"/>
</dbReference>
<dbReference type="NCBIfam" id="NF001531">
    <property type="entry name" value="PRK00364.2-2"/>
    <property type="match status" value="1"/>
</dbReference>
<dbReference type="PANTHER" id="PTHR10772">
    <property type="entry name" value="10 KDA HEAT SHOCK PROTEIN"/>
    <property type="match status" value="1"/>
</dbReference>
<dbReference type="PANTHER" id="PTHR10772:SF58">
    <property type="entry name" value="CO-CHAPERONIN GROES"/>
    <property type="match status" value="1"/>
</dbReference>
<dbReference type="Pfam" id="PF00166">
    <property type="entry name" value="Cpn10"/>
    <property type="match status" value="1"/>
</dbReference>
<dbReference type="PRINTS" id="PR00297">
    <property type="entry name" value="CHAPERONIN10"/>
</dbReference>
<dbReference type="SMART" id="SM00883">
    <property type="entry name" value="Cpn10"/>
    <property type="match status" value="1"/>
</dbReference>
<dbReference type="SUPFAM" id="SSF50129">
    <property type="entry name" value="GroES-like"/>
    <property type="match status" value="1"/>
</dbReference>
<dbReference type="PROSITE" id="PS00681">
    <property type="entry name" value="CHAPERONINS_CPN10"/>
    <property type="match status" value="1"/>
</dbReference>
<reference key="1">
    <citation type="journal article" date="2008" name="J. Bacteriol.">
        <title>The pangenome structure of Escherichia coli: comparative genomic analysis of E. coli commensal and pathogenic isolates.</title>
        <authorList>
            <person name="Rasko D.A."/>
            <person name="Rosovitz M.J."/>
            <person name="Myers G.S.A."/>
            <person name="Mongodin E.F."/>
            <person name="Fricke W.F."/>
            <person name="Gajer P."/>
            <person name="Crabtree J."/>
            <person name="Sebaihia M."/>
            <person name="Thomson N.R."/>
            <person name="Chaudhuri R."/>
            <person name="Henderson I.R."/>
            <person name="Sperandio V."/>
            <person name="Ravel J."/>
        </authorList>
    </citation>
    <scope>NUCLEOTIDE SEQUENCE [LARGE SCALE GENOMIC DNA]</scope>
    <source>
        <strain>E24377A / ETEC</strain>
    </source>
</reference>
<name>CH10_ECO24</name>
<comment type="function">
    <text evidence="1">Together with the chaperonin GroEL, plays an essential role in assisting protein folding. The GroEL-GroES system forms a nano-cage that allows encapsulation of the non-native substrate proteins and provides a physical environment optimized to promote and accelerate protein folding. GroES binds to the apical surface of the GroEL ring, thereby capping the opening of the GroEL channel.</text>
</comment>
<comment type="subunit">
    <text evidence="1">Heptamer of 7 subunits arranged in a ring. Interacts with the chaperonin GroEL.</text>
</comment>
<comment type="subcellular location">
    <subcellularLocation>
        <location evidence="1">Cytoplasm</location>
    </subcellularLocation>
</comment>
<comment type="similarity">
    <text evidence="1">Belongs to the GroES chaperonin family.</text>
</comment>
<evidence type="ECO:0000255" key="1">
    <source>
        <dbReference type="HAMAP-Rule" id="MF_00580"/>
    </source>
</evidence>